<evidence type="ECO:0000250" key="1"/>
<evidence type="ECO:0000255" key="2"/>
<evidence type="ECO:0000255" key="3">
    <source>
        <dbReference type="PROSITE-ProRule" id="PRU00581"/>
    </source>
</evidence>
<gene>
    <name type="primary">PLP2</name>
    <name type="synonym">A4</name>
</gene>
<sequence>ISGPWSDFFRALGAVILYLMTSIVVLVERGNNSKGAAGVLGLCAAGLFGYDAYITFPSGTRRHTAAPTDPADGPVR</sequence>
<reference key="1">
    <citation type="journal article" date="1994" name="J. Biol. Chem.">
        <title>Selective cloning of cDNA for secretory proteins of early embryos. Identification of a transiently expressed Kunitz domain protein from preimplantation sheep trophoblast.</title>
        <authorList>
            <person name="Kramer K.K."/>
            <person name="Duffy J.Y."/>
            <person name="Klemann S.W."/>
            <person name="Bixby J.A."/>
            <person name="Low B.G."/>
            <person name="Pope W.F."/>
            <person name="Roberts R.M."/>
        </authorList>
    </citation>
    <scope>NUCLEOTIDE SEQUENCE [MRNA]</scope>
    <source>
        <tissue>Conceptus membrane</tissue>
        <tissue>Uterus</tissue>
    </source>
</reference>
<protein>
    <recommendedName>
        <fullName>Proteolipid protein 2</fullName>
    </recommendedName>
    <alternativeName>
        <fullName>Differentiation-dependent protein A4</fullName>
    </alternativeName>
    <alternativeName>
        <fullName>Intestinal membrane A4 protein</fullName>
    </alternativeName>
</protein>
<proteinExistence type="evidence at transcript level"/>
<comment type="function">
    <text evidence="1">May play a role in cell differentiation in the intestinal epithelium.</text>
</comment>
<comment type="subcellular location">
    <subcellularLocation>
        <location evidence="1">Membrane</location>
        <topology evidence="1">Multi-pass membrane protein</topology>
    </subcellularLocation>
</comment>
<keyword id="KW-0325">Glycoprotein</keyword>
<keyword id="KW-0472">Membrane</keyword>
<keyword id="KW-1185">Reference proteome</keyword>
<keyword id="KW-0812">Transmembrane</keyword>
<keyword id="KW-1133">Transmembrane helix</keyword>
<organism>
    <name type="scientific">Ovis aries</name>
    <name type="common">Sheep</name>
    <dbReference type="NCBI Taxonomy" id="9940"/>
    <lineage>
        <taxon>Eukaryota</taxon>
        <taxon>Metazoa</taxon>
        <taxon>Chordata</taxon>
        <taxon>Craniata</taxon>
        <taxon>Vertebrata</taxon>
        <taxon>Euteleostomi</taxon>
        <taxon>Mammalia</taxon>
        <taxon>Eutheria</taxon>
        <taxon>Laurasiatheria</taxon>
        <taxon>Artiodactyla</taxon>
        <taxon>Ruminantia</taxon>
        <taxon>Pecora</taxon>
        <taxon>Bovidae</taxon>
        <taxon>Caprinae</taxon>
        <taxon>Ovis</taxon>
    </lineage>
</organism>
<dbReference type="EMBL" id="U01946">
    <property type="protein sequence ID" value="AAC04310.1"/>
    <property type="molecule type" value="mRNA"/>
</dbReference>
<dbReference type="STRING" id="9940.ENSOARP00000011645"/>
<dbReference type="GlyCosmos" id="Q28597">
    <property type="glycosylation" value="1 site, No reported glycans"/>
</dbReference>
<dbReference type="Proteomes" id="UP000002356">
    <property type="component" value="Unplaced"/>
</dbReference>
<dbReference type="GO" id="GO:0016020">
    <property type="term" value="C:membrane"/>
    <property type="evidence" value="ECO:0007669"/>
    <property type="project" value="UniProtKB-SubCell"/>
</dbReference>
<feature type="chain" id="PRO_0000156823" description="Proteolipid protein 2">
    <location>
        <begin position="1" status="less than"/>
        <end position="76"/>
    </location>
</feature>
<feature type="transmembrane region" description="Helical" evidence="2">
    <location>
        <begin position="8"/>
        <end position="28"/>
    </location>
</feature>
<feature type="transmembrane region" description="Helical" evidence="2">
    <location>
        <begin position="36"/>
        <end position="56"/>
    </location>
</feature>
<feature type="domain" description="MARVEL" evidence="3">
    <location>
        <begin position="1" status="less than"/>
        <end position="60"/>
    </location>
</feature>
<feature type="glycosylation site" description="N-linked (GlcNAc...) asparagine" evidence="2">
    <location>
        <position position="31"/>
    </location>
</feature>
<feature type="non-terminal residue">
    <location>
        <position position="1"/>
    </location>
</feature>
<name>PLP2_SHEEP</name>
<accession>Q28597</accession>